<keyword id="KW-0472">Membrane</keyword>
<keyword id="KW-0602">Photosynthesis</keyword>
<keyword id="KW-0604">Photosystem II</keyword>
<keyword id="KW-0793">Thylakoid</keyword>
<gene>
    <name evidence="1" type="primary">psb28</name>
    <name type="ordered locus">Syncc9605_1197</name>
</gene>
<dbReference type="EMBL" id="CP000110">
    <property type="protein sequence ID" value="ABB34952.1"/>
    <property type="molecule type" value="Genomic_DNA"/>
</dbReference>
<dbReference type="RefSeq" id="WP_011364173.1">
    <property type="nucleotide sequence ID" value="NC_007516.1"/>
</dbReference>
<dbReference type="SMR" id="Q3AKD0"/>
<dbReference type="STRING" id="110662.Syncc9605_1197"/>
<dbReference type="KEGG" id="syd:Syncc9605_1197"/>
<dbReference type="eggNOG" id="ENOG5031GDS">
    <property type="taxonomic scope" value="Bacteria"/>
</dbReference>
<dbReference type="HOGENOM" id="CLU_137323_1_0_3"/>
<dbReference type="OrthoDB" id="559598at2"/>
<dbReference type="GO" id="GO:0009654">
    <property type="term" value="C:photosystem II oxygen evolving complex"/>
    <property type="evidence" value="ECO:0007669"/>
    <property type="project" value="InterPro"/>
</dbReference>
<dbReference type="GO" id="GO:0031676">
    <property type="term" value="C:plasma membrane-derived thylakoid membrane"/>
    <property type="evidence" value="ECO:0007669"/>
    <property type="project" value="UniProtKB-SubCell"/>
</dbReference>
<dbReference type="GO" id="GO:0015979">
    <property type="term" value="P:photosynthesis"/>
    <property type="evidence" value="ECO:0007669"/>
    <property type="project" value="UniProtKB-UniRule"/>
</dbReference>
<dbReference type="Gene3D" id="2.40.30.220">
    <property type="entry name" value="Photosystem II Psb28"/>
    <property type="match status" value="1"/>
</dbReference>
<dbReference type="HAMAP" id="MF_01370">
    <property type="entry name" value="PSII_Psb28"/>
    <property type="match status" value="1"/>
</dbReference>
<dbReference type="InterPro" id="IPR038676">
    <property type="entry name" value="Psb28_c1_sf"/>
</dbReference>
<dbReference type="InterPro" id="IPR005610">
    <property type="entry name" value="PSII_Psb28_class-1"/>
</dbReference>
<dbReference type="NCBIfam" id="TIGR03047">
    <property type="entry name" value="PS_II_psb28"/>
    <property type="match status" value="1"/>
</dbReference>
<dbReference type="PANTHER" id="PTHR34963">
    <property type="match status" value="1"/>
</dbReference>
<dbReference type="PANTHER" id="PTHR34963:SF2">
    <property type="entry name" value="PHOTOSYSTEM II REACTION CENTER PSB28 PROTEIN, CHLOROPLASTIC"/>
    <property type="match status" value="1"/>
</dbReference>
<dbReference type="Pfam" id="PF03912">
    <property type="entry name" value="Psb28"/>
    <property type="match status" value="1"/>
</dbReference>
<evidence type="ECO:0000255" key="1">
    <source>
        <dbReference type="HAMAP-Rule" id="MF_01370"/>
    </source>
</evidence>
<evidence type="ECO:0000256" key="2">
    <source>
        <dbReference type="SAM" id="MobiDB-lite"/>
    </source>
</evidence>
<reference key="1">
    <citation type="submission" date="2005-07" db="EMBL/GenBank/DDBJ databases">
        <title>Complete sequence of Synechococcus sp. CC9605.</title>
        <authorList>
            <consortium name="US DOE Joint Genome Institute"/>
            <person name="Copeland A."/>
            <person name="Lucas S."/>
            <person name="Lapidus A."/>
            <person name="Barry K."/>
            <person name="Detter J.C."/>
            <person name="Glavina T."/>
            <person name="Hammon N."/>
            <person name="Israni S."/>
            <person name="Pitluck S."/>
            <person name="Schmutz J."/>
            <person name="Martinez M."/>
            <person name="Larimer F."/>
            <person name="Land M."/>
            <person name="Kyrpides N."/>
            <person name="Ivanova N."/>
            <person name="Richardson P."/>
        </authorList>
    </citation>
    <scope>NUCLEOTIDE SEQUENCE [LARGE SCALE GENOMIC DNA]</scope>
    <source>
        <strain>CC9605</strain>
    </source>
</reference>
<accession>Q3AKD0</accession>
<sequence length="127" mass="14201">MSKAAIQFFRGVNEPVVPDIRLTRSRDGRTGQATFRFEQPAAIAPETMGDITGMWMVDEEGEMVTREVNGKFVNGTASALEAVYSWKSEQDFERFMRFAQRYADANGLGYSQSQDSDQTEGADNQQA</sequence>
<comment type="subunit">
    <text evidence="1">Part of the photosystem II complex.</text>
</comment>
<comment type="subcellular location">
    <subcellularLocation>
        <location evidence="1">Cellular thylakoid membrane</location>
        <topology evidence="1">Peripheral membrane protein</topology>
        <orientation evidence="1">Cytoplasmic side</orientation>
    </subcellularLocation>
</comment>
<comment type="similarity">
    <text evidence="1">Belongs to the Psb28 family.</text>
</comment>
<feature type="chain" id="PRO_0000271575" description="Photosystem II reaction center Psb28 protein">
    <location>
        <begin position="1"/>
        <end position="127"/>
    </location>
</feature>
<feature type="region of interest" description="Disordered" evidence="2">
    <location>
        <begin position="108"/>
        <end position="127"/>
    </location>
</feature>
<feature type="compositionally biased region" description="Polar residues" evidence="2">
    <location>
        <begin position="109"/>
        <end position="127"/>
    </location>
</feature>
<protein>
    <recommendedName>
        <fullName evidence="1">Photosystem II reaction center Psb28 protein</fullName>
    </recommendedName>
    <alternativeName>
        <fullName evidence="1">Photosystem II 13 kDa protein</fullName>
    </alternativeName>
    <alternativeName>
        <fullName evidence="1">Photosystem II reaction center W protein</fullName>
    </alternativeName>
</protein>
<organism>
    <name type="scientific">Synechococcus sp. (strain CC9605)</name>
    <dbReference type="NCBI Taxonomy" id="110662"/>
    <lineage>
        <taxon>Bacteria</taxon>
        <taxon>Bacillati</taxon>
        <taxon>Cyanobacteriota</taxon>
        <taxon>Cyanophyceae</taxon>
        <taxon>Synechococcales</taxon>
        <taxon>Synechococcaceae</taxon>
        <taxon>Synechococcus</taxon>
    </lineage>
</organism>
<proteinExistence type="inferred from homology"/>
<name>PSB28_SYNSC</name>